<comment type="similarity">
    <text evidence="2">Belongs to the CbbQ/NirQ/NorQ/GpvN family.</text>
</comment>
<feature type="chain" id="PRO_0000284807" description="Uncharacterized protein SAR1421">
    <location>
        <begin position="1"/>
        <end position="263"/>
    </location>
</feature>
<feature type="binding site" evidence="1">
    <location>
        <begin position="31"/>
        <end position="38"/>
    </location>
    <ligand>
        <name>ATP</name>
        <dbReference type="ChEBI" id="CHEBI:30616"/>
    </ligand>
</feature>
<reference key="1">
    <citation type="journal article" date="2004" name="Proc. Natl. Acad. Sci. U.S.A.">
        <title>Complete genomes of two clinical Staphylococcus aureus strains: evidence for the rapid evolution of virulence and drug resistance.</title>
        <authorList>
            <person name="Holden M.T.G."/>
            <person name="Feil E.J."/>
            <person name="Lindsay J.A."/>
            <person name="Peacock S.J."/>
            <person name="Day N.P.J."/>
            <person name="Enright M.C."/>
            <person name="Foster T.J."/>
            <person name="Moore C.E."/>
            <person name="Hurst L."/>
            <person name="Atkin R."/>
            <person name="Barron A."/>
            <person name="Bason N."/>
            <person name="Bentley S.D."/>
            <person name="Chillingworth C."/>
            <person name="Chillingworth T."/>
            <person name="Churcher C."/>
            <person name="Clark L."/>
            <person name="Corton C."/>
            <person name="Cronin A."/>
            <person name="Doggett J."/>
            <person name="Dowd L."/>
            <person name="Feltwell T."/>
            <person name="Hance Z."/>
            <person name="Harris B."/>
            <person name="Hauser H."/>
            <person name="Holroyd S."/>
            <person name="Jagels K."/>
            <person name="James K.D."/>
            <person name="Lennard N."/>
            <person name="Line A."/>
            <person name="Mayes R."/>
            <person name="Moule S."/>
            <person name="Mungall K."/>
            <person name="Ormond D."/>
            <person name="Quail M.A."/>
            <person name="Rabbinowitsch E."/>
            <person name="Rutherford K.M."/>
            <person name="Sanders M."/>
            <person name="Sharp S."/>
            <person name="Simmonds M."/>
            <person name="Stevens K."/>
            <person name="Whitehead S."/>
            <person name="Barrell B.G."/>
            <person name="Spratt B.G."/>
            <person name="Parkhill J."/>
        </authorList>
    </citation>
    <scope>NUCLEOTIDE SEQUENCE [LARGE SCALE GENOMIC DNA]</scope>
    <source>
        <strain>MRSA252</strain>
    </source>
</reference>
<gene>
    <name type="ordered locus">SAR1421</name>
</gene>
<proteinExistence type="inferred from homology"/>
<protein>
    <recommendedName>
        <fullName>Uncharacterized protein SAR1421</fullName>
    </recommendedName>
</protein>
<keyword id="KW-0067">ATP-binding</keyword>
<keyword id="KW-0547">Nucleotide-binding</keyword>
<evidence type="ECO:0000255" key="1"/>
<evidence type="ECO:0000305" key="2"/>
<name>Y1421_STAAR</name>
<dbReference type="EMBL" id="BX571856">
    <property type="protein sequence ID" value="CAG40418.1"/>
    <property type="molecule type" value="Genomic_DNA"/>
</dbReference>
<dbReference type="RefSeq" id="WP_001185421.1">
    <property type="nucleotide sequence ID" value="NC_002952.2"/>
</dbReference>
<dbReference type="SMR" id="Q6GGZ9"/>
<dbReference type="KEGG" id="sar:SAR1421"/>
<dbReference type="HOGENOM" id="CLU_080347_0_0_9"/>
<dbReference type="Proteomes" id="UP000000596">
    <property type="component" value="Chromosome"/>
</dbReference>
<dbReference type="GO" id="GO:0005524">
    <property type="term" value="F:ATP binding"/>
    <property type="evidence" value="ECO:0007669"/>
    <property type="project" value="UniProtKB-KW"/>
</dbReference>
<dbReference type="GO" id="GO:0016887">
    <property type="term" value="F:ATP hydrolysis activity"/>
    <property type="evidence" value="ECO:0007669"/>
    <property type="project" value="InterPro"/>
</dbReference>
<dbReference type="CDD" id="cd00009">
    <property type="entry name" value="AAA"/>
    <property type="match status" value="1"/>
</dbReference>
<dbReference type="Gene3D" id="3.40.50.300">
    <property type="entry name" value="P-loop containing nucleotide triphosphate hydrolases"/>
    <property type="match status" value="1"/>
</dbReference>
<dbReference type="InterPro" id="IPR011704">
    <property type="entry name" value="ATPase_dyneun-rel_AAA"/>
</dbReference>
<dbReference type="InterPro" id="IPR050764">
    <property type="entry name" value="CbbQ/NirQ/NorQ/GpvN"/>
</dbReference>
<dbReference type="InterPro" id="IPR013615">
    <property type="entry name" value="CbbQ_C"/>
</dbReference>
<dbReference type="InterPro" id="IPR001270">
    <property type="entry name" value="ClpA/B"/>
</dbReference>
<dbReference type="InterPro" id="IPR027417">
    <property type="entry name" value="P-loop_NTPase"/>
</dbReference>
<dbReference type="PANTHER" id="PTHR42759:SF1">
    <property type="entry name" value="MAGNESIUM-CHELATASE SUBUNIT CHLD"/>
    <property type="match status" value="1"/>
</dbReference>
<dbReference type="PANTHER" id="PTHR42759">
    <property type="entry name" value="MOXR FAMILY PROTEIN"/>
    <property type="match status" value="1"/>
</dbReference>
<dbReference type="Pfam" id="PF07728">
    <property type="entry name" value="AAA_5"/>
    <property type="match status" value="1"/>
</dbReference>
<dbReference type="Pfam" id="PF08406">
    <property type="entry name" value="CbbQ_C"/>
    <property type="match status" value="1"/>
</dbReference>
<dbReference type="PRINTS" id="PR00300">
    <property type="entry name" value="CLPPROTEASEA"/>
</dbReference>
<dbReference type="SUPFAM" id="SSF52540">
    <property type="entry name" value="P-loop containing nucleoside triphosphate hydrolases"/>
    <property type="match status" value="1"/>
</dbReference>
<accession>Q6GGZ9</accession>
<sequence length="263" mass="29449">MALKHYKNSDSTVFNDAKALFDLNKNILLKGPTGSGKTKLAETLSEVVDTPMHQVNCSVDLDTESLLGFKTIKTNAEGQQEIVFVDGPVIKAMKEGHILYIDEINMAKPETLPVLNGVLDYRRQITNPYTGEVIKAVPGFNVIAAINEGYVGTLPMNEALKNRFVVIHVDYIDGDILKNVIKEQSLLQDDKQIEQIIKFNEDLRTMSKQGQISEEAASIRALLDLCDLITVMPVERAIKRTIIDKLEDEREQQAIYNAVELNF</sequence>
<organism>
    <name type="scientific">Staphylococcus aureus (strain MRSA252)</name>
    <dbReference type="NCBI Taxonomy" id="282458"/>
    <lineage>
        <taxon>Bacteria</taxon>
        <taxon>Bacillati</taxon>
        <taxon>Bacillota</taxon>
        <taxon>Bacilli</taxon>
        <taxon>Bacillales</taxon>
        <taxon>Staphylococcaceae</taxon>
        <taxon>Staphylococcus</taxon>
    </lineage>
</organism>